<evidence type="ECO:0000250" key="1"/>
<evidence type="ECO:0000255" key="2"/>
<evidence type="ECO:0000305" key="3"/>
<keyword id="KW-1003">Cell membrane</keyword>
<keyword id="KW-0472">Membrane</keyword>
<keyword id="KW-0484">Methanogenesis</keyword>
<keyword id="KW-0489">Methyltransferase</keyword>
<keyword id="KW-0554">One-carbon metabolism</keyword>
<keyword id="KW-0808">Transferase</keyword>
<keyword id="KW-1278">Translocase</keyword>
<keyword id="KW-0812">Transmembrane</keyword>
<keyword id="KW-1133">Transmembrane helix</keyword>
<organism>
    <name type="scientific">Methanosarcina mazei (strain ATCC BAA-159 / DSM 3647 / Goe1 / Go1 / JCM 11833 / OCM 88)</name>
    <name type="common">Methanosarcina frisia</name>
    <dbReference type="NCBI Taxonomy" id="192952"/>
    <lineage>
        <taxon>Archaea</taxon>
        <taxon>Methanobacteriati</taxon>
        <taxon>Methanobacteriota</taxon>
        <taxon>Stenosarchaea group</taxon>
        <taxon>Methanomicrobia</taxon>
        <taxon>Methanosarcinales</taxon>
        <taxon>Methanosarcinaceae</taxon>
        <taxon>Methanosarcina</taxon>
    </lineage>
</organism>
<feature type="chain" id="PRO_0000147524" description="Tetrahydromethanopterin S-methyltransferase subunit C">
    <location>
        <begin position="1"/>
        <end position="267"/>
    </location>
</feature>
<feature type="transmembrane region" description="Helical" evidence="2">
    <location>
        <begin position="19"/>
        <end position="39"/>
    </location>
</feature>
<feature type="transmembrane region" description="Helical" evidence="2">
    <location>
        <begin position="40"/>
        <end position="60"/>
    </location>
</feature>
<feature type="transmembrane region" description="Helical" evidence="2">
    <location>
        <begin position="75"/>
        <end position="95"/>
    </location>
</feature>
<feature type="transmembrane region" description="Helical" evidence="2">
    <location>
        <begin position="96"/>
        <end position="116"/>
    </location>
</feature>
<feature type="transmembrane region" description="Helical" evidence="2">
    <location>
        <begin position="140"/>
        <end position="160"/>
    </location>
</feature>
<feature type="transmembrane region" description="Helical" evidence="2">
    <location>
        <begin position="164"/>
        <end position="184"/>
    </location>
</feature>
<feature type="transmembrane region" description="Helical" evidence="2">
    <location>
        <begin position="198"/>
        <end position="218"/>
    </location>
</feature>
<feature type="transmembrane region" description="Helical" evidence="2">
    <location>
        <begin position="221"/>
        <end position="241"/>
    </location>
</feature>
<feature type="sequence conflict" description="In Ref. 1; AAC38332." evidence="3" ref="1">
    <original>MP</original>
    <variation>NA</variation>
    <location>
        <begin position="37"/>
        <end position="38"/>
    </location>
</feature>
<feature type="sequence conflict" description="In Ref. 1; AAC38332." evidence="3" ref="1">
    <original>R</original>
    <variation>S</variation>
    <location>
        <position position="61"/>
    </location>
</feature>
<protein>
    <recommendedName>
        <fullName>Tetrahydromethanopterin S-methyltransferase subunit C</fullName>
        <ecNumber>7.2.1.4</ecNumber>
    </recommendedName>
    <alternativeName>
        <fullName>N5-methyltetrahydromethanopterin--coenzyme M methyltransferase subunit C</fullName>
    </alternativeName>
</protein>
<name>MTRC_METMA</name>
<accession>O59638</accession>
<sequence>MSAGGAGGEAKGAYPQQTLMALGIVGGLVGIYLGHFMPPAYSFFGGIGAICATVWGADAVRRVASYGLGTGVPSIGMLALGMGILAALFGLALGGIAGPILAVVVAAIIGGVIGALANKVIGMGIPIMEQAMIEISCAGTLVILGLSVVIAGSFDYAAIIENVIANGYIALIFIIGGMGILHPFNACLGPDESQDRTLILAVEKAAIALIITGFASSLHEGLMTAGINILVGLVIWYVAFSKYYALIKRDAYAVVGTGLLPSAEELQ</sequence>
<proteinExistence type="inferred from homology"/>
<gene>
    <name type="primary">mtrC</name>
    <name type="ordered locus">MM_1545</name>
</gene>
<comment type="function">
    <text>Part of a complex that catalyzes the formation of methyl-coenzyme M and tetrahydromethanopterin from coenzyme M and methyl-tetrahydromethanopterin. This is an energy-conserving, sodium-ion translocating step.</text>
</comment>
<comment type="catalytic activity">
    <reaction>
        <text>5-methyl-5,6,7,8-tetrahydromethanopterin + coenzyme M + 2 Na(+)(in) = 5,6,7,8-tetrahydromethanopterin + methyl-coenzyme M + 2 Na(+)(out)</text>
        <dbReference type="Rhea" id="RHEA:53492"/>
        <dbReference type="ChEBI" id="CHEBI:29101"/>
        <dbReference type="ChEBI" id="CHEBI:58103"/>
        <dbReference type="ChEBI" id="CHEBI:58116"/>
        <dbReference type="ChEBI" id="CHEBI:58286"/>
        <dbReference type="ChEBI" id="CHEBI:58319"/>
        <dbReference type="EC" id="7.2.1.4"/>
    </reaction>
</comment>
<comment type="pathway">
    <text>One-carbon metabolism; methanogenesis from CO(2); methyl-coenzyme M from 5,10-methylene-5,6,7,8-tetrahydromethanopterin: step 2/2.</text>
</comment>
<comment type="subunit">
    <text evidence="1">The complex is composed of 8 subunits; MtrA, MtrB, MtrC, MtrD, MtrE, MtrF, MtrG and MtrH.</text>
</comment>
<comment type="subcellular location">
    <subcellularLocation>
        <location evidence="3">Cell membrane</location>
        <topology evidence="3">Multi-pass membrane protein</topology>
    </subcellularLocation>
</comment>
<comment type="similarity">
    <text evidence="3">Belongs to the MtrC family.</text>
</comment>
<reference key="1">
    <citation type="journal article" date="1998" name="FEBS Lett.">
        <title>Cloning, sequencing and expression of the genes encoding the sodium translocating N5-methyltetrahydromethanopterin:coenzyme M methyltransferase of the methylotrophic archaeon Methanosarcina mazei Go1.</title>
        <authorList>
            <person name="Lienard T."/>
            <person name="Gottschalk G."/>
        </authorList>
    </citation>
    <scope>NUCLEOTIDE SEQUENCE [GENOMIC DNA]</scope>
    <source>
        <strain>ATCC BAA-159 / DSM 3647 / Goe1 / Go1 / JCM 11833 / OCM 88</strain>
    </source>
</reference>
<reference key="2">
    <citation type="journal article" date="2002" name="J. Mol. Microbiol. Biotechnol.">
        <title>The genome of Methanosarcina mazei: evidence for lateral gene transfer between Bacteria and Archaea.</title>
        <authorList>
            <person name="Deppenmeier U."/>
            <person name="Johann A."/>
            <person name="Hartsch T."/>
            <person name="Merkl R."/>
            <person name="Schmitz R.A."/>
            <person name="Martinez-Arias R."/>
            <person name="Henne A."/>
            <person name="Wiezer A."/>
            <person name="Baeumer S."/>
            <person name="Jacobi C."/>
            <person name="Brueggemann H."/>
            <person name="Lienard T."/>
            <person name="Christmann A."/>
            <person name="Boemecke M."/>
            <person name="Steckel S."/>
            <person name="Bhattacharyya A."/>
            <person name="Lykidis A."/>
            <person name="Overbeek R."/>
            <person name="Klenk H.-P."/>
            <person name="Gunsalus R.P."/>
            <person name="Fritz H.-J."/>
            <person name="Gottschalk G."/>
        </authorList>
    </citation>
    <scope>NUCLEOTIDE SEQUENCE [LARGE SCALE GENOMIC DNA]</scope>
    <source>
        <strain>ATCC BAA-159 / DSM 3647 / Goe1 / Go1 / JCM 11833 / OCM 88</strain>
    </source>
</reference>
<dbReference type="EC" id="7.2.1.4"/>
<dbReference type="EMBL" id="AF042381">
    <property type="protein sequence ID" value="AAC38332.1"/>
    <property type="molecule type" value="Genomic_DNA"/>
</dbReference>
<dbReference type="EMBL" id="AE008384">
    <property type="protein sequence ID" value="AAM31241.1"/>
    <property type="molecule type" value="Genomic_DNA"/>
</dbReference>
<dbReference type="RefSeq" id="WP_011033491.1">
    <property type="nucleotide sequence ID" value="NC_003901.1"/>
</dbReference>
<dbReference type="SMR" id="O59638"/>
<dbReference type="GeneID" id="82160595"/>
<dbReference type="KEGG" id="mma:MM_1545"/>
<dbReference type="PATRIC" id="fig|192952.21.peg.1786"/>
<dbReference type="eggNOG" id="arCOG04868">
    <property type="taxonomic scope" value="Archaea"/>
</dbReference>
<dbReference type="HOGENOM" id="CLU_092286_0_0_2"/>
<dbReference type="BRENDA" id="2.1.1.86">
    <property type="organism ID" value="3270"/>
</dbReference>
<dbReference type="UniPathway" id="UPA00640">
    <property type="reaction ID" value="UER00698"/>
</dbReference>
<dbReference type="Proteomes" id="UP000000595">
    <property type="component" value="Chromosome"/>
</dbReference>
<dbReference type="GO" id="GO:0005886">
    <property type="term" value="C:plasma membrane"/>
    <property type="evidence" value="ECO:0007669"/>
    <property type="project" value="UniProtKB-SubCell"/>
</dbReference>
<dbReference type="GO" id="GO:0030269">
    <property type="term" value="F:tetrahydromethanopterin S-methyltransferase activity"/>
    <property type="evidence" value="ECO:0007669"/>
    <property type="project" value="UniProtKB-UniRule"/>
</dbReference>
<dbReference type="GO" id="GO:0019386">
    <property type="term" value="P:methanogenesis, from carbon dioxide"/>
    <property type="evidence" value="ECO:0007669"/>
    <property type="project" value="UniProtKB-UniRule"/>
</dbReference>
<dbReference type="GO" id="GO:0032259">
    <property type="term" value="P:methylation"/>
    <property type="evidence" value="ECO:0007669"/>
    <property type="project" value="UniProtKB-KW"/>
</dbReference>
<dbReference type="GO" id="GO:0006730">
    <property type="term" value="P:one-carbon metabolic process"/>
    <property type="evidence" value="ECO:0007669"/>
    <property type="project" value="UniProtKB-UniRule"/>
</dbReference>
<dbReference type="HAMAP" id="MF_01096">
    <property type="entry name" value="MtrC"/>
    <property type="match status" value="1"/>
</dbReference>
<dbReference type="InterPro" id="IPR005865">
    <property type="entry name" value="THM_MeTrfase_su_C"/>
</dbReference>
<dbReference type="NCBIfam" id="TIGR01148">
    <property type="entry name" value="mtrC"/>
    <property type="match status" value="1"/>
</dbReference>
<dbReference type="Pfam" id="PF04211">
    <property type="entry name" value="MtrC"/>
    <property type="match status" value="1"/>
</dbReference>
<dbReference type="PIRSF" id="PIRSF006530">
    <property type="entry name" value="MtrC"/>
    <property type="match status" value="1"/>
</dbReference>